<comment type="function">
    <text>Major component of the virus occlusion bodies, which are large proteinaceous structures (polyhedra), that protect the virus from the outside environment for extended periods until they are ingested by insect larvae.</text>
</comment>
<accession>P36701</accession>
<sequence>MHGLDDAQYLQQKAHNKRISEFRSSSNSGINVTVVLKYTNGVVQVYNWQGTEVIAGSLNRQLMKFPNYMNPDKHGRIEWPGEGVEHQHGLIRSNGGNGSYDIGAGDPYAMQFIVQGSVDWNATRLRFFGPDGSRWMPDDQGGASVRAGLLNAAEDIINSKMQPLYFCDRMAGKSYYVRFDDKYAPRFPTIGFEVYRYRVGATNEMGGESARTAVASLISFPTFSTAYVNEKVAVENFFQPRELVYQNSYGYTV</sequence>
<organism>
    <name type="scientific">Orgyia pseudotsugata cypovirus</name>
    <name type="common">OpCPV</name>
    <name type="synonym">Orgyia pseudotsugata cytoplasmic polyhedrosis virus</name>
    <dbReference type="NCBI Taxonomy" id="31592"/>
    <lineage>
        <taxon>Viruses</taxon>
        <taxon>Riboviria</taxon>
        <taxon>Orthornavirae</taxon>
        <taxon>Duplornaviricota</taxon>
        <taxon>Resentoviricetes</taxon>
        <taxon>Reovirales</taxon>
        <taxon>Spinareoviridae</taxon>
        <taxon>Cypovirus</taxon>
        <taxon>Cypovirus 5</taxon>
    </lineage>
</organism>
<dbReference type="EMBL" id="U06196">
    <property type="protein sequence ID" value="AAA50751.1"/>
    <property type="molecule type" value="Genomic_RNA"/>
</dbReference>
<dbReference type="EMBL" id="U06194">
    <property type="protein sequence ID" value="AAA50750.1"/>
    <property type="molecule type" value="Genomic_RNA"/>
</dbReference>
<dbReference type="PDB" id="5A8U">
    <property type="method" value="X-ray"/>
    <property type="resolution" value="1.61 A"/>
    <property type="chains" value="A=2-253"/>
</dbReference>
<dbReference type="PDB" id="5A8V">
    <property type="method" value="X-ray"/>
    <property type="resolution" value="2.07 A"/>
    <property type="chains" value="A=2-253"/>
</dbReference>
<dbReference type="PDBsum" id="5A8U"/>
<dbReference type="PDBsum" id="5A8V"/>
<dbReference type="SMR" id="P36701"/>
<dbReference type="EvolutionaryTrace" id="P36701"/>
<dbReference type="GO" id="GO:0039679">
    <property type="term" value="C:viral occlusion body"/>
    <property type="evidence" value="ECO:0007669"/>
    <property type="project" value="UniProtKB-KW"/>
</dbReference>
<protein>
    <recommendedName>
        <fullName>Polyhedrin</fullName>
    </recommendedName>
    <alternativeName>
        <fullName>C-polyhedrin</fullName>
    </alternativeName>
</protein>
<feature type="chain" id="PRO_0000222810" description="Polyhedrin">
    <location>
        <begin position="1"/>
        <end position="253"/>
    </location>
</feature>
<feature type="helix" evidence="1">
    <location>
        <begin position="6"/>
        <end position="21"/>
    </location>
</feature>
<feature type="helix" evidence="1">
    <location>
        <begin position="22"/>
        <end position="24"/>
    </location>
</feature>
<feature type="strand" evidence="1">
    <location>
        <begin position="30"/>
        <end position="37"/>
    </location>
</feature>
<feature type="strand" evidence="1">
    <location>
        <begin position="43"/>
        <end position="58"/>
    </location>
</feature>
<feature type="helix" evidence="1">
    <location>
        <begin position="60"/>
        <end position="63"/>
    </location>
</feature>
<feature type="strand" evidence="1">
    <location>
        <begin position="64"/>
        <end position="66"/>
    </location>
</feature>
<feature type="strand" evidence="1">
    <location>
        <begin position="68"/>
        <end position="70"/>
    </location>
</feature>
<feature type="helix" evidence="1">
    <location>
        <begin position="84"/>
        <end position="91"/>
    </location>
</feature>
<feature type="strand" evidence="1">
    <location>
        <begin position="108"/>
        <end position="118"/>
    </location>
</feature>
<feature type="helix" evidence="1">
    <location>
        <begin position="120"/>
        <end position="122"/>
    </location>
</feature>
<feature type="strand" evidence="1">
    <location>
        <begin position="124"/>
        <end position="128"/>
    </location>
</feature>
<feature type="strand" evidence="2">
    <location>
        <begin position="134"/>
        <end position="136"/>
    </location>
</feature>
<feature type="strand" evidence="1">
    <location>
        <begin position="137"/>
        <end position="139"/>
    </location>
</feature>
<feature type="strand" evidence="2">
    <location>
        <begin position="141"/>
        <end position="143"/>
    </location>
</feature>
<feature type="turn" evidence="1">
    <location>
        <begin position="145"/>
        <end position="147"/>
    </location>
</feature>
<feature type="helix" evidence="1">
    <location>
        <begin position="153"/>
        <end position="155"/>
    </location>
</feature>
<feature type="helix" evidence="1">
    <location>
        <begin position="158"/>
        <end position="160"/>
    </location>
</feature>
<feature type="strand" evidence="1">
    <location>
        <begin position="161"/>
        <end position="166"/>
    </location>
</feature>
<feature type="strand" evidence="1">
    <location>
        <begin position="169"/>
        <end position="178"/>
    </location>
</feature>
<feature type="strand" evidence="1">
    <location>
        <begin position="180"/>
        <end position="184"/>
    </location>
</feature>
<feature type="strand" evidence="1">
    <location>
        <begin position="189"/>
        <end position="196"/>
    </location>
</feature>
<feature type="strand" evidence="1">
    <location>
        <begin position="199"/>
        <end position="202"/>
    </location>
</feature>
<feature type="helix" evidence="1">
    <location>
        <begin position="207"/>
        <end position="209"/>
    </location>
</feature>
<feature type="helix" evidence="1">
    <location>
        <begin position="210"/>
        <end position="216"/>
    </location>
</feature>
<feature type="strand" evidence="1">
    <location>
        <begin position="223"/>
        <end position="229"/>
    </location>
</feature>
<feature type="helix" evidence="1">
    <location>
        <begin position="230"/>
        <end position="236"/>
    </location>
</feature>
<feature type="helix" evidence="1">
    <location>
        <begin position="238"/>
        <end position="241"/>
    </location>
</feature>
<keyword id="KW-0002">3D-structure</keyword>
<keyword id="KW-0842">Viral occlusion body</keyword>
<proteinExistence type="evidence at protein level"/>
<name>PYHD_CPVOP</name>
<reference key="1">
    <citation type="journal article" date="1994" name="J. Gen. Virol.">
        <title>Analysis of the C-polyhedrin genes from different geographical isolates of a type 5 cytoplasmic polyhedrosis virus.</title>
        <authorList>
            <person name="Galinski M.S."/>
            <person name="Yu Y."/>
            <person name="Heminway B.R."/>
            <person name="Beaudreau G.S."/>
        </authorList>
    </citation>
    <scope>NUCLEOTIDE SEQUENCE [GENOMIC RNA]</scope>
</reference>
<evidence type="ECO:0007829" key="1">
    <source>
        <dbReference type="PDB" id="5A8U"/>
    </source>
</evidence>
<evidence type="ECO:0007829" key="2">
    <source>
        <dbReference type="PDB" id="5A8V"/>
    </source>
</evidence>
<organismHost>
    <name type="scientific">Orgyia pseudotsugata</name>
    <name type="common">Douglas-fir tussock moth</name>
    <dbReference type="NCBI Taxonomy" id="33414"/>
</organismHost>